<keyword id="KW-0378">Hydrolase</keyword>
<keyword id="KW-0511">Multifunctional enzyme</keyword>
<keyword id="KW-0658">Purine biosynthesis</keyword>
<keyword id="KW-0808">Transferase</keyword>
<dbReference type="EC" id="2.1.2.3" evidence="1"/>
<dbReference type="EC" id="3.5.4.10" evidence="1"/>
<dbReference type="EMBL" id="CP000350">
    <property type="protein sequence ID" value="ABJ75914.1"/>
    <property type="molecule type" value="Genomic_DNA"/>
</dbReference>
<dbReference type="RefSeq" id="WP_011670196.1">
    <property type="nucleotide sequence ID" value="NC_008510.1"/>
</dbReference>
<dbReference type="SMR" id="Q04T56"/>
<dbReference type="KEGG" id="lbj:LBJ_1329"/>
<dbReference type="HOGENOM" id="CLU_016316_5_2_12"/>
<dbReference type="UniPathway" id="UPA00074">
    <property type="reaction ID" value="UER00133"/>
</dbReference>
<dbReference type="UniPathway" id="UPA00074">
    <property type="reaction ID" value="UER00135"/>
</dbReference>
<dbReference type="Proteomes" id="UP000000656">
    <property type="component" value="Chromosome 1"/>
</dbReference>
<dbReference type="GO" id="GO:0005829">
    <property type="term" value="C:cytosol"/>
    <property type="evidence" value="ECO:0007669"/>
    <property type="project" value="TreeGrafter"/>
</dbReference>
<dbReference type="GO" id="GO:0003937">
    <property type="term" value="F:IMP cyclohydrolase activity"/>
    <property type="evidence" value="ECO:0007669"/>
    <property type="project" value="UniProtKB-UniRule"/>
</dbReference>
<dbReference type="GO" id="GO:0004643">
    <property type="term" value="F:phosphoribosylaminoimidazolecarboxamide formyltransferase activity"/>
    <property type="evidence" value="ECO:0007669"/>
    <property type="project" value="UniProtKB-UniRule"/>
</dbReference>
<dbReference type="GO" id="GO:0006189">
    <property type="term" value="P:'de novo' IMP biosynthetic process"/>
    <property type="evidence" value="ECO:0007669"/>
    <property type="project" value="UniProtKB-UniRule"/>
</dbReference>
<dbReference type="CDD" id="cd01421">
    <property type="entry name" value="IMPCH"/>
    <property type="match status" value="1"/>
</dbReference>
<dbReference type="FunFam" id="3.40.140.20:FF:000001">
    <property type="entry name" value="Bifunctional purine biosynthesis protein PurH"/>
    <property type="match status" value="1"/>
</dbReference>
<dbReference type="FunFam" id="3.40.50.1380:FF:000001">
    <property type="entry name" value="Bifunctional purine biosynthesis protein PurH"/>
    <property type="match status" value="1"/>
</dbReference>
<dbReference type="Gene3D" id="3.40.140.20">
    <property type="match status" value="2"/>
</dbReference>
<dbReference type="Gene3D" id="3.40.50.1380">
    <property type="entry name" value="Methylglyoxal synthase-like domain"/>
    <property type="match status" value="1"/>
</dbReference>
<dbReference type="HAMAP" id="MF_00139">
    <property type="entry name" value="PurH"/>
    <property type="match status" value="1"/>
</dbReference>
<dbReference type="InterPro" id="IPR024051">
    <property type="entry name" value="AICAR_Tfase_dup_dom_sf"/>
</dbReference>
<dbReference type="InterPro" id="IPR016193">
    <property type="entry name" value="Cytidine_deaminase-like"/>
</dbReference>
<dbReference type="InterPro" id="IPR011607">
    <property type="entry name" value="MGS-like_dom"/>
</dbReference>
<dbReference type="InterPro" id="IPR036914">
    <property type="entry name" value="MGS-like_dom_sf"/>
</dbReference>
<dbReference type="InterPro" id="IPR002695">
    <property type="entry name" value="PurH-like"/>
</dbReference>
<dbReference type="NCBIfam" id="NF002049">
    <property type="entry name" value="PRK00881.1"/>
    <property type="match status" value="1"/>
</dbReference>
<dbReference type="NCBIfam" id="TIGR00355">
    <property type="entry name" value="purH"/>
    <property type="match status" value="1"/>
</dbReference>
<dbReference type="PANTHER" id="PTHR11692:SF0">
    <property type="entry name" value="BIFUNCTIONAL PURINE BIOSYNTHESIS PROTEIN ATIC"/>
    <property type="match status" value="1"/>
</dbReference>
<dbReference type="PANTHER" id="PTHR11692">
    <property type="entry name" value="BIFUNCTIONAL PURINE BIOSYNTHESIS PROTEIN PURH"/>
    <property type="match status" value="1"/>
</dbReference>
<dbReference type="Pfam" id="PF01808">
    <property type="entry name" value="AICARFT_IMPCHas"/>
    <property type="match status" value="1"/>
</dbReference>
<dbReference type="Pfam" id="PF02142">
    <property type="entry name" value="MGS"/>
    <property type="match status" value="1"/>
</dbReference>
<dbReference type="PIRSF" id="PIRSF000414">
    <property type="entry name" value="AICARFT_IMPCHas"/>
    <property type="match status" value="1"/>
</dbReference>
<dbReference type="SMART" id="SM00798">
    <property type="entry name" value="AICARFT_IMPCHas"/>
    <property type="match status" value="1"/>
</dbReference>
<dbReference type="SMART" id="SM00851">
    <property type="entry name" value="MGS"/>
    <property type="match status" value="1"/>
</dbReference>
<dbReference type="SUPFAM" id="SSF53927">
    <property type="entry name" value="Cytidine deaminase-like"/>
    <property type="match status" value="1"/>
</dbReference>
<dbReference type="SUPFAM" id="SSF52335">
    <property type="entry name" value="Methylglyoxal synthase-like"/>
    <property type="match status" value="1"/>
</dbReference>
<dbReference type="PROSITE" id="PS51855">
    <property type="entry name" value="MGS"/>
    <property type="match status" value="1"/>
</dbReference>
<name>PUR9_LEPBJ</name>
<protein>
    <recommendedName>
        <fullName evidence="1">Bifunctional purine biosynthesis protein PurH</fullName>
    </recommendedName>
    <domain>
        <recommendedName>
            <fullName evidence="1">Phosphoribosylaminoimidazolecarboxamide formyltransferase</fullName>
            <ecNumber evidence="1">2.1.2.3</ecNumber>
        </recommendedName>
        <alternativeName>
            <fullName evidence="1">AICAR transformylase</fullName>
        </alternativeName>
    </domain>
    <domain>
        <recommendedName>
            <fullName evidence="1">IMP cyclohydrolase</fullName>
            <ecNumber evidence="1">3.5.4.10</ecNumber>
        </recommendedName>
        <alternativeName>
            <fullName evidence="1">ATIC</fullName>
        </alternativeName>
        <alternativeName>
            <fullName evidence="1">IMP synthase</fullName>
        </alternativeName>
        <alternativeName>
            <fullName evidence="1">Inosinicase</fullName>
        </alternativeName>
    </domain>
</protein>
<organism>
    <name type="scientific">Leptospira borgpetersenii serovar Hardjo-bovis (strain JB197)</name>
    <dbReference type="NCBI Taxonomy" id="355277"/>
    <lineage>
        <taxon>Bacteria</taxon>
        <taxon>Pseudomonadati</taxon>
        <taxon>Spirochaetota</taxon>
        <taxon>Spirochaetia</taxon>
        <taxon>Leptospirales</taxon>
        <taxon>Leptospiraceae</taxon>
        <taxon>Leptospira</taxon>
    </lineage>
</organism>
<accession>Q04T56</accession>
<evidence type="ECO:0000255" key="1">
    <source>
        <dbReference type="HAMAP-Rule" id="MF_00139"/>
    </source>
</evidence>
<evidence type="ECO:0000255" key="2">
    <source>
        <dbReference type="PROSITE-ProRule" id="PRU01202"/>
    </source>
</evidence>
<sequence>MIQIKRALISVSDKSDIVEFAQFLNQNGVEIISTGGTLKLLKDNGIQAIAIDDYTGFPEILEGRVKTLHPKVHGGLLGVVSNPAHKQKMEELKIPKIDLVVVNLYPFLKTVSKPGVQLEEAIENIDIGGPSMIRSAAKNYKHTLVLTDPSDYEEVRVLIASGGISEEVAAGYMRKAFSHTAMYDTAISSWFHKQAGDVFPDVLNLSFLKKQKLRYGENPHQAASFYEPLFVKSDFSPLQGKELSFNNMLDFDAAFHISSLLPENTVCIIKHLNPCGIAYADDPLEAFQLARRTDPISAFGGVIGIKGIVHGELATAITENFVEGVIAQKFTPEALELFSKKPNIRLIEIENFKEALDELDLRPIHHGLLIQERDYTTITEKDLKVVTKKQPTSDDIRGLMFAWSCVRFIKSNAIVYTEENATLGIGAGQMSRVDSVQLGANKALNVGLSVVGSYVASDAFFPFRDGIDALAKAGAKAIIQPGGSVRDAEVIQAADEHGLIMVFTGMRHFRH</sequence>
<feature type="chain" id="PRO_1000018904" description="Bifunctional purine biosynthesis protein PurH">
    <location>
        <begin position="1"/>
        <end position="511"/>
    </location>
</feature>
<feature type="domain" description="MGS-like" evidence="2">
    <location>
        <begin position="1"/>
        <end position="147"/>
    </location>
</feature>
<comment type="catalytic activity">
    <reaction evidence="1">
        <text>(6R)-10-formyltetrahydrofolate + 5-amino-1-(5-phospho-beta-D-ribosyl)imidazole-4-carboxamide = 5-formamido-1-(5-phospho-D-ribosyl)imidazole-4-carboxamide + (6S)-5,6,7,8-tetrahydrofolate</text>
        <dbReference type="Rhea" id="RHEA:22192"/>
        <dbReference type="ChEBI" id="CHEBI:57453"/>
        <dbReference type="ChEBI" id="CHEBI:58467"/>
        <dbReference type="ChEBI" id="CHEBI:58475"/>
        <dbReference type="ChEBI" id="CHEBI:195366"/>
        <dbReference type="EC" id="2.1.2.3"/>
    </reaction>
</comment>
<comment type="catalytic activity">
    <reaction evidence="1">
        <text>IMP + H2O = 5-formamido-1-(5-phospho-D-ribosyl)imidazole-4-carboxamide</text>
        <dbReference type="Rhea" id="RHEA:18445"/>
        <dbReference type="ChEBI" id="CHEBI:15377"/>
        <dbReference type="ChEBI" id="CHEBI:58053"/>
        <dbReference type="ChEBI" id="CHEBI:58467"/>
        <dbReference type="EC" id="3.5.4.10"/>
    </reaction>
</comment>
<comment type="pathway">
    <text evidence="1">Purine metabolism; IMP biosynthesis via de novo pathway; 5-formamido-1-(5-phospho-D-ribosyl)imidazole-4-carboxamide from 5-amino-1-(5-phospho-D-ribosyl)imidazole-4-carboxamide (10-formyl THF route): step 1/1.</text>
</comment>
<comment type="pathway">
    <text evidence="1">Purine metabolism; IMP biosynthesis via de novo pathway; IMP from 5-formamido-1-(5-phospho-D-ribosyl)imidazole-4-carboxamide: step 1/1.</text>
</comment>
<comment type="domain">
    <text evidence="1">The IMP cyclohydrolase activity resides in the N-terminal region.</text>
</comment>
<comment type="similarity">
    <text evidence="1">Belongs to the PurH family.</text>
</comment>
<gene>
    <name evidence="1" type="primary">purH</name>
    <name type="ordered locus">LBJ_1329</name>
</gene>
<proteinExistence type="inferred from homology"/>
<reference key="1">
    <citation type="journal article" date="2006" name="Proc. Natl. Acad. Sci. U.S.A.">
        <title>Genome reduction in Leptospira borgpetersenii reflects limited transmission potential.</title>
        <authorList>
            <person name="Bulach D.M."/>
            <person name="Zuerner R.L."/>
            <person name="Wilson P."/>
            <person name="Seemann T."/>
            <person name="McGrath A."/>
            <person name="Cullen P.A."/>
            <person name="Davis J."/>
            <person name="Johnson M."/>
            <person name="Kuczek E."/>
            <person name="Alt D.P."/>
            <person name="Peterson-Burch B."/>
            <person name="Coppel R.L."/>
            <person name="Rood J.I."/>
            <person name="Davies J.K."/>
            <person name="Adler B."/>
        </authorList>
    </citation>
    <scope>NUCLEOTIDE SEQUENCE [LARGE SCALE GENOMIC DNA]</scope>
    <source>
        <strain>JB197</strain>
    </source>
</reference>